<sequence>MSTPLQGIKVLDFTGVQSGPSCTQMLAWFGADVIKIERPGVGDVTRHQLRDIPDIDALYFTMLNSNKRSIELNTKTAEGKEVMEKLIREADILVENFHPGAIDHMGFTWEHIQEINPRLIFGSIKGFDECSPYVNVKAYENVAQAAGGAASTTGFWDGPPLVSAAALGDSNTGMHLLIGLLAALLHREKTGRGQRVTMSMQDAVLNLCRVKLRDQQRLDKLGYLEEYPQYPNGTFGDAVPRGGNAGGGGQPGWILKCKGWETDPNAYIYFTIQEQNWENTCKAIGKPEWITDPAYSTAHARQPHIFDIFAEIEKYTVTIDKHEAVAYLTQFDIPCAPVLSMKEISLDPSLRQSGSVVEVEQPLRGKYLTVGCPMKFSAFTPDIKAAPLLGEHTAAVLQELGYSDDEIAAMKQNHAI</sequence>
<protein>
    <recommendedName>
        <fullName>Formyl-CoA:oxalate CoA-transferase</fullName>
        <shortName>FCOCT</shortName>
        <ecNumber evidence="2">2.8.3.16</ecNumber>
    </recommendedName>
    <alternativeName>
        <fullName evidence="2">Formyl-coenzyme A transferase</fullName>
        <shortName evidence="2">Formyl-CoA transferase</shortName>
    </alternativeName>
</protein>
<comment type="function">
    <text evidence="1">Involved in the catabolism of oxalate and in the adapatation to low pH via the induction of the oxalate-dependent acid tolerance response (ATR). Catalyzes the transfer of the CoA moiety from formyl-CoA to oxalate (By similarity).</text>
</comment>
<comment type="catalytic activity">
    <reaction evidence="2">
        <text>formyl-CoA + oxalate = oxalyl-CoA + formate</text>
        <dbReference type="Rhea" id="RHEA:16545"/>
        <dbReference type="ChEBI" id="CHEBI:15740"/>
        <dbReference type="ChEBI" id="CHEBI:30623"/>
        <dbReference type="ChEBI" id="CHEBI:57376"/>
        <dbReference type="ChEBI" id="CHEBI:57388"/>
        <dbReference type="EC" id="2.8.3.16"/>
    </reaction>
</comment>
<comment type="pathway">
    <text evidence="2">Metabolic intermediate degradation; oxalate degradation; CO(2) and formate from oxalate: step 1/2.</text>
</comment>
<comment type="subunit">
    <text evidence="2">Homodimer.</text>
</comment>
<comment type="similarity">
    <text evidence="2">Belongs to the CoA-transferase III family. Frc subfamily.</text>
</comment>
<dbReference type="EC" id="2.8.3.16" evidence="2"/>
<dbReference type="EMBL" id="CP000243">
    <property type="protein sequence ID" value="ABE08172.1"/>
    <property type="molecule type" value="Genomic_DNA"/>
</dbReference>
<dbReference type="RefSeq" id="WP_000106759.1">
    <property type="nucleotide sequence ID" value="NZ_CP064825.1"/>
</dbReference>
<dbReference type="SMR" id="Q1R8Z2"/>
<dbReference type="GeneID" id="75202557"/>
<dbReference type="KEGG" id="eci:UTI89_C2706"/>
<dbReference type="HOGENOM" id="CLU_033975_2_1_6"/>
<dbReference type="UniPathway" id="UPA00540">
    <property type="reaction ID" value="UER00598"/>
</dbReference>
<dbReference type="Proteomes" id="UP000001952">
    <property type="component" value="Chromosome"/>
</dbReference>
<dbReference type="GO" id="GO:0033608">
    <property type="term" value="F:formyl-CoA transferase activity"/>
    <property type="evidence" value="ECO:0007669"/>
    <property type="project" value="UniProtKB-EC"/>
</dbReference>
<dbReference type="GO" id="GO:0033611">
    <property type="term" value="P:oxalate catabolic process"/>
    <property type="evidence" value="ECO:0007669"/>
    <property type="project" value="UniProtKB-UniRule"/>
</dbReference>
<dbReference type="Gene3D" id="3.40.50.10540">
    <property type="entry name" value="Crotonobetainyl-coa:carnitine coa-transferase, domain 1"/>
    <property type="match status" value="1"/>
</dbReference>
<dbReference type="Gene3D" id="3.30.1540.10">
    <property type="entry name" value="formyl-coa transferase, domain 3"/>
    <property type="match status" value="1"/>
</dbReference>
<dbReference type="HAMAP" id="MF_00742">
    <property type="entry name" value="Formyl_CoA_transfer"/>
    <property type="match status" value="1"/>
</dbReference>
<dbReference type="InterPro" id="IPR050483">
    <property type="entry name" value="CoA-transferase_III_domain"/>
</dbReference>
<dbReference type="InterPro" id="IPR003673">
    <property type="entry name" value="CoA-Trfase_fam_III"/>
</dbReference>
<dbReference type="InterPro" id="IPR044855">
    <property type="entry name" value="CoA-Trfase_III_dom3_sf"/>
</dbReference>
<dbReference type="InterPro" id="IPR023606">
    <property type="entry name" value="CoA-Trfase_III_dom_1_sf"/>
</dbReference>
<dbReference type="InterPro" id="IPR017659">
    <property type="entry name" value="Formyl_CoA_transfer"/>
</dbReference>
<dbReference type="NCBIfam" id="TIGR03253">
    <property type="entry name" value="oxalate_frc"/>
    <property type="match status" value="1"/>
</dbReference>
<dbReference type="NCBIfam" id="NF003809">
    <property type="entry name" value="PRK05398.1"/>
    <property type="match status" value="1"/>
</dbReference>
<dbReference type="PANTHER" id="PTHR48207">
    <property type="entry name" value="SUCCINATE--HYDROXYMETHYLGLUTARATE COA-TRANSFERASE"/>
    <property type="match status" value="1"/>
</dbReference>
<dbReference type="PANTHER" id="PTHR48207:SF3">
    <property type="entry name" value="SUCCINATE--HYDROXYMETHYLGLUTARATE COA-TRANSFERASE"/>
    <property type="match status" value="1"/>
</dbReference>
<dbReference type="Pfam" id="PF02515">
    <property type="entry name" value="CoA_transf_3"/>
    <property type="match status" value="1"/>
</dbReference>
<dbReference type="SUPFAM" id="SSF89796">
    <property type="entry name" value="CoA-transferase family III (CaiB/BaiF)"/>
    <property type="match status" value="1"/>
</dbReference>
<keyword id="KW-0808">Transferase</keyword>
<proteinExistence type="inferred from homology"/>
<accession>Q1R8Z2</accession>
<evidence type="ECO:0000250" key="1"/>
<evidence type="ECO:0000255" key="2">
    <source>
        <dbReference type="HAMAP-Rule" id="MF_00742"/>
    </source>
</evidence>
<gene>
    <name evidence="2" type="primary">frc</name>
    <name type="ordered locus">UTI89_C2706</name>
</gene>
<name>FCTA_ECOUT</name>
<feature type="chain" id="PRO_0000300987" description="Formyl-CoA:oxalate CoA-transferase">
    <location>
        <begin position="1"/>
        <end position="416"/>
    </location>
</feature>
<feature type="active site" description="Nucleophile" evidence="2">
    <location>
        <position position="169"/>
    </location>
</feature>
<feature type="binding site" evidence="1">
    <location>
        <begin position="17"/>
        <end position="18"/>
    </location>
    <ligand>
        <name>CoA</name>
        <dbReference type="ChEBI" id="CHEBI:57287"/>
    </ligand>
</feature>
<feature type="binding site" evidence="2">
    <location>
        <position position="38"/>
    </location>
    <ligand>
        <name>CoA</name>
        <dbReference type="ChEBI" id="CHEBI:57287"/>
    </ligand>
</feature>
<feature type="binding site" evidence="1">
    <location>
        <begin position="72"/>
        <end position="75"/>
    </location>
    <ligand>
        <name>CoA</name>
        <dbReference type="ChEBI" id="CHEBI:57287"/>
    </ligand>
</feature>
<feature type="binding site" evidence="1">
    <location>
        <begin position="96"/>
        <end position="98"/>
    </location>
    <ligand>
        <name>CoA</name>
        <dbReference type="ChEBI" id="CHEBI:57287"/>
    </ligand>
</feature>
<feature type="binding site" evidence="2">
    <location>
        <position position="104"/>
    </location>
    <ligand>
        <name>CoA</name>
        <dbReference type="ChEBI" id="CHEBI:57287"/>
    </ligand>
</feature>
<feature type="binding site" evidence="1">
    <location>
        <begin position="137"/>
        <end position="140"/>
    </location>
    <ligand>
        <name>CoA</name>
        <dbReference type="ChEBI" id="CHEBI:57287"/>
    </ligand>
</feature>
<feature type="binding site" evidence="1">
    <location>
        <begin position="248"/>
        <end position="250"/>
    </location>
    <ligand>
        <name>substrate</name>
    </ligand>
</feature>
<feature type="binding site" evidence="1">
    <location>
        <begin position="273"/>
        <end position="275"/>
    </location>
    <ligand>
        <name>CoA</name>
        <dbReference type="ChEBI" id="CHEBI:57287"/>
    </ligand>
</feature>
<reference key="1">
    <citation type="journal article" date="2006" name="Proc. Natl. Acad. Sci. U.S.A.">
        <title>Identification of genes subject to positive selection in uropathogenic strains of Escherichia coli: a comparative genomics approach.</title>
        <authorList>
            <person name="Chen S.L."/>
            <person name="Hung C.-S."/>
            <person name="Xu J."/>
            <person name="Reigstad C.S."/>
            <person name="Magrini V."/>
            <person name="Sabo A."/>
            <person name="Blasiar D."/>
            <person name="Bieri T."/>
            <person name="Meyer R.R."/>
            <person name="Ozersky P."/>
            <person name="Armstrong J.R."/>
            <person name="Fulton R.S."/>
            <person name="Latreille J.P."/>
            <person name="Spieth J."/>
            <person name="Hooton T.M."/>
            <person name="Mardis E.R."/>
            <person name="Hultgren S.J."/>
            <person name="Gordon J.I."/>
        </authorList>
    </citation>
    <scope>NUCLEOTIDE SEQUENCE [LARGE SCALE GENOMIC DNA]</scope>
    <source>
        <strain>UTI89 / UPEC</strain>
    </source>
</reference>
<organism>
    <name type="scientific">Escherichia coli (strain UTI89 / UPEC)</name>
    <dbReference type="NCBI Taxonomy" id="364106"/>
    <lineage>
        <taxon>Bacteria</taxon>
        <taxon>Pseudomonadati</taxon>
        <taxon>Pseudomonadota</taxon>
        <taxon>Gammaproteobacteria</taxon>
        <taxon>Enterobacterales</taxon>
        <taxon>Enterobacteriaceae</taxon>
        <taxon>Escherichia</taxon>
    </lineage>
</organism>